<proteinExistence type="inferred from homology"/>
<dbReference type="EC" id="2.1.1.181" evidence="1"/>
<dbReference type="EMBL" id="CP001113">
    <property type="protein sequence ID" value="ACF61787.1"/>
    <property type="molecule type" value="Genomic_DNA"/>
</dbReference>
<dbReference type="RefSeq" id="WP_001275962.1">
    <property type="nucleotide sequence ID" value="NZ_CCMR01000003.1"/>
</dbReference>
<dbReference type="SMR" id="B4T083"/>
<dbReference type="KEGG" id="see:SNSL254_A0890"/>
<dbReference type="HOGENOM" id="CLU_027534_3_0_6"/>
<dbReference type="Proteomes" id="UP000008824">
    <property type="component" value="Chromosome"/>
</dbReference>
<dbReference type="GO" id="GO:0005737">
    <property type="term" value="C:cytoplasm"/>
    <property type="evidence" value="ECO:0007669"/>
    <property type="project" value="UniProtKB-SubCell"/>
</dbReference>
<dbReference type="GO" id="GO:0052907">
    <property type="term" value="F:23S rRNA (adenine(1618)-N(6))-methyltransferase activity"/>
    <property type="evidence" value="ECO:0007669"/>
    <property type="project" value="UniProtKB-EC"/>
</dbReference>
<dbReference type="GO" id="GO:0070475">
    <property type="term" value="P:rRNA base methylation"/>
    <property type="evidence" value="ECO:0007669"/>
    <property type="project" value="TreeGrafter"/>
</dbReference>
<dbReference type="FunFam" id="3.40.50.150:FF:000045">
    <property type="entry name" value="Ribosomal RNA large subunit methyltransferase F"/>
    <property type="match status" value="1"/>
</dbReference>
<dbReference type="Gene3D" id="3.40.50.150">
    <property type="entry name" value="Vaccinia Virus protein VP39"/>
    <property type="match status" value="1"/>
</dbReference>
<dbReference type="HAMAP" id="MF_01848">
    <property type="entry name" value="23SrRNA_methyltr_F"/>
    <property type="match status" value="1"/>
</dbReference>
<dbReference type="InterPro" id="IPR010286">
    <property type="entry name" value="METTL16/RlmF"/>
</dbReference>
<dbReference type="InterPro" id="IPR016909">
    <property type="entry name" value="rRNA_lsu_MeTfrase_F"/>
</dbReference>
<dbReference type="InterPro" id="IPR029063">
    <property type="entry name" value="SAM-dependent_MTases_sf"/>
</dbReference>
<dbReference type="NCBIfam" id="NF008725">
    <property type="entry name" value="PRK11727.1"/>
    <property type="match status" value="1"/>
</dbReference>
<dbReference type="PANTHER" id="PTHR13393:SF0">
    <property type="entry name" value="RNA N6-ADENOSINE-METHYLTRANSFERASE METTL16"/>
    <property type="match status" value="1"/>
</dbReference>
<dbReference type="PANTHER" id="PTHR13393">
    <property type="entry name" value="SAM-DEPENDENT METHYLTRANSFERASE"/>
    <property type="match status" value="1"/>
</dbReference>
<dbReference type="Pfam" id="PF05971">
    <property type="entry name" value="Methyltransf_10"/>
    <property type="match status" value="1"/>
</dbReference>
<dbReference type="PIRSF" id="PIRSF029038">
    <property type="entry name" value="Mtase_YbiN_prd"/>
    <property type="match status" value="1"/>
</dbReference>
<dbReference type="SUPFAM" id="SSF53335">
    <property type="entry name" value="S-adenosyl-L-methionine-dependent methyltransferases"/>
    <property type="match status" value="1"/>
</dbReference>
<protein>
    <recommendedName>
        <fullName evidence="1">Ribosomal RNA large subunit methyltransferase F</fullName>
        <ecNumber evidence="1">2.1.1.181</ecNumber>
    </recommendedName>
    <alternativeName>
        <fullName evidence="1">23S rRNA mA1618 methyltransferase</fullName>
    </alternativeName>
    <alternativeName>
        <fullName evidence="1">rRNA adenine N-6-methyltransferase</fullName>
    </alternativeName>
</protein>
<feature type="chain" id="PRO_1000188533" description="Ribosomal RNA large subunit methyltransferase F">
    <location>
        <begin position="1"/>
        <end position="308"/>
    </location>
</feature>
<keyword id="KW-0963">Cytoplasm</keyword>
<keyword id="KW-0489">Methyltransferase</keyword>
<keyword id="KW-0698">rRNA processing</keyword>
<keyword id="KW-0949">S-adenosyl-L-methionine</keyword>
<keyword id="KW-0808">Transferase</keyword>
<accession>B4T083</accession>
<comment type="function">
    <text evidence="1">Specifically methylates the adenine in position 1618 of 23S rRNA.</text>
</comment>
<comment type="catalytic activity">
    <reaction evidence="1">
        <text>adenosine(1618) in 23S rRNA + S-adenosyl-L-methionine = N(6)-methyladenosine(1618) in 23S rRNA + S-adenosyl-L-homocysteine + H(+)</text>
        <dbReference type="Rhea" id="RHEA:16497"/>
        <dbReference type="Rhea" id="RHEA-COMP:10229"/>
        <dbReference type="Rhea" id="RHEA-COMP:10231"/>
        <dbReference type="ChEBI" id="CHEBI:15378"/>
        <dbReference type="ChEBI" id="CHEBI:57856"/>
        <dbReference type="ChEBI" id="CHEBI:59789"/>
        <dbReference type="ChEBI" id="CHEBI:74411"/>
        <dbReference type="ChEBI" id="CHEBI:74449"/>
        <dbReference type="EC" id="2.1.1.181"/>
    </reaction>
</comment>
<comment type="subcellular location">
    <subcellularLocation>
        <location evidence="1">Cytoplasm</location>
    </subcellularLocation>
</comment>
<comment type="similarity">
    <text evidence="1">Belongs to the methyltransferase superfamily. METTL16/RlmF family.</text>
</comment>
<evidence type="ECO:0000255" key="1">
    <source>
        <dbReference type="HAMAP-Rule" id="MF_01848"/>
    </source>
</evidence>
<name>RLMF_SALNS</name>
<reference key="1">
    <citation type="journal article" date="2011" name="J. Bacteriol.">
        <title>Comparative genomics of 28 Salmonella enterica isolates: evidence for CRISPR-mediated adaptive sublineage evolution.</title>
        <authorList>
            <person name="Fricke W.F."/>
            <person name="Mammel M.K."/>
            <person name="McDermott P.F."/>
            <person name="Tartera C."/>
            <person name="White D.G."/>
            <person name="Leclerc J.E."/>
            <person name="Ravel J."/>
            <person name="Cebula T.A."/>
        </authorList>
    </citation>
    <scope>NUCLEOTIDE SEQUENCE [LARGE SCALE GENOMIC DNA]</scope>
    <source>
        <strain>SL254</strain>
    </source>
</reference>
<sequence length="308" mass="34310">MSAQKPGLHPRNRHQHRYDLAALCQTTPELTSFLIRTPAGEQSVDFANPQAVKALNKALLAHFYAVTHWDIPPGFLCPPVPGRADYIHHLADLLGETTGSIPAQATILDVGVGANCIYPLIGVHEYGWRFTGSEVSDAAMSSAQAIIQANTGLSRAIRLRRQKDPAAIFTGIIHKNEFYDATLCNPPFHDSAAAARAGSERKRRNLGQNKDDALNFGGQQQELWCEGGEVAFIKKMIAESQSFRRQVLWFTTLVSRGENLPPLYRALTEAGAVKVVKKEMAQGQKQSRFIAWTFMDDDQRRRFITRKR</sequence>
<organism>
    <name type="scientific">Salmonella newport (strain SL254)</name>
    <dbReference type="NCBI Taxonomy" id="423368"/>
    <lineage>
        <taxon>Bacteria</taxon>
        <taxon>Pseudomonadati</taxon>
        <taxon>Pseudomonadota</taxon>
        <taxon>Gammaproteobacteria</taxon>
        <taxon>Enterobacterales</taxon>
        <taxon>Enterobacteriaceae</taxon>
        <taxon>Salmonella</taxon>
    </lineage>
</organism>
<gene>
    <name evidence="1" type="primary">rlmF</name>
    <name type="ordered locus">SNSL254_A0890</name>
</gene>